<reference key="1">
    <citation type="submission" date="2007-12" db="EMBL/GenBank/DDBJ databases">
        <title>Brucella suis ATCC 23445 whole genome shotgun sequencing project.</title>
        <authorList>
            <person name="Setubal J.C."/>
            <person name="Bowns C."/>
            <person name="Boyle S."/>
            <person name="Crasta O.R."/>
            <person name="Czar M.J."/>
            <person name="Dharmanolla C."/>
            <person name="Gillespie J.J."/>
            <person name="Kenyon R.W."/>
            <person name="Lu J."/>
            <person name="Mane S."/>
            <person name="Mohapatra S."/>
            <person name="Nagrani S."/>
            <person name="Purkayastha A."/>
            <person name="Rajasimha H.K."/>
            <person name="Shallom J.M."/>
            <person name="Shallom S."/>
            <person name="Shukla M."/>
            <person name="Snyder E.E."/>
            <person name="Sobral B.W."/>
            <person name="Wattam A.R."/>
            <person name="Will R."/>
            <person name="Williams K."/>
            <person name="Yoo H."/>
            <person name="Bruce D."/>
            <person name="Detter C."/>
            <person name="Munk C."/>
            <person name="Brettin T.S."/>
        </authorList>
    </citation>
    <scope>NUCLEOTIDE SEQUENCE [LARGE SCALE GENOMIC DNA]</scope>
    <source>
        <strain>ATCC 23445 / NCTC 10510</strain>
    </source>
</reference>
<name>RRF_BRUSI</name>
<comment type="function">
    <text evidence="1">Responsible for the release of ribosomes from messenger RNA at the termination of protein biosynthesis. May increase the efficiency of translation by recycling ribosomes from one round of translation to another.</text>
</comment>
<comment type="subcellular location">
    <subcellularLocation>
        <location evidence="1">Cytoplasm</location>
    </subcellularLocation>
</comment>
<comment type="similarity">
    <text evidence="1">Belongs to the RRF family.</text>
</comment>
<accession>B0CGV6</accession>
<proteinExistence type="inferred from homology"/>
<keyword id="KW-0963">Cytoplasm</keyword>
<keyword id="KW-0648">Protein biosynthesis</keyword>
<sequence length="186" mass="20664">MSDAFDINDLKRRMEGAVNALKHDLGGLRTGRASASLLEPITIEAYGSTMPINQVANISVPESRMLSVSVWDKSMVGAVERAIRDSGLGLNPITDGMTLRIPLPELNEQRRKELVKIAHQYAEQGRIAARHVRRDGMDQLKKLEKDSVISQDESRVLSEKVQKLTDDTIAEMDKIVAVKEGEIMQV</sequence>
<protein>
    <recommendedName>
        <fullName evidence="1">Ribosome-recycling factor</fullName>
        <shortName evidence="1">RRF</shortName>
    </recommendedName>
    <alternativeName>
        <fullName evidence="1">Ribosome-releasing factor</fullName>
    </alternativeName>
</protein>
<feature type="chain" id="PRO_1000074572" description="Ribosome-recycling factor">
    <location>
        <begin position="1"/>
        <end position="186"/>
    </location>
</feature>
<organism>
    <name type="scientific">Brucella suis (strain ATCC 23445 / NCTC 10510)</name>
    <dbReference type="NCBI Taxonomy" id="470137"/>
    <lineage>
        <taxon>Bacteria</taxon>
        <taxon>Pseudomonadati</taxon>
        <taxon>Pseudomonadota</taxon>
        <taxon>Alphaproteobacteria</taxon>
        <taxon>Hyphomicrobiales</taxon>
        <taxon>Brucellaceae</taxon>
        <taxon>Brucella/Ochrobactrum group</taxon>
        <taxon>Brucella</taxon>
    </lineage>
</organism>
<dbReference type="EMBL" id="CP000911">
    <property type="protein sequence ID" value="ABY38257.1"/>
    <property type="molecule type" value="Genomic_DNA"/>
</dbReference>
<dbReference type="RefSeq" id="WP_002964286.1">
    <property type="nucleotide sequence ID" value="NC_010169.1"/>
</dbReference>
<dbReference type="SMR" id="B0CGV6"/>
<dbReference type="GeneID" id="97533591"/>
<dbReference type="KEGG" id="bmt:BSUIS_A1206"/>
<dbReference type="HOGENOM" id="CLU_073981_2_0_5"/>
<dbReference type="Proteomes" id="UP000008545">
    <property type="component" value="Chromosome I"/>
</dbReference>
<dbReference type="GO" id="GO:0005829">
    <property type="term" value="C:cytosol"/>
    <property type="evidence" value="ECO:0007669"/>
    <property type="project" value="GOC"/>
</dbReference>
<dbReference type="GO" id="GO:0043023">
    <property type="term" value="F:ribosomal large subunit binding"/>
    <property type="evidence" value="ECO:0007669"/>
    <property type="project" value="TreeGrafter"/>
</dbReference>
<dbReference type="GO" id="GO:0002184">
    <property type="term" value="P:cytoplasmic translational termination"/>
    <property type="evidence" value="ECO:0007669"/>
    <property type="project" value="TreeGrafter"/>
</dbReference>
<dbReference type="CDD" id="cd00520">
    <property type="entry name" value="RRF"/>
    <property type="match status" value="1"/>
</dbReference>
<dbReference type="FunFam" id="1.10.132.20:FF:000001">
    <property type="entry name" value="Ribosome-recycling factor"/>
    <property type="match status" value="1"/>
</dbReference>
<dbReference type="FunFam" id="3.30.1360.40:FF:000001">
    <property type="entry name" value="Ribosome-recycling factor"/>
    <property type="match status" value="1"/>
</dbReference>
<dbReference type="Gene3D" id="3.30.1360.40">
    <property type="match status" value="1"/>
</dbReference>
<dbReference type="Gene3D" id="1.10.132.20">
    <property type="entry name" value="Ribosome-recycling factor"/>
    <property type="match status" value="1"/>
</dbReference>
<dbReference type="HAMAP" id="MF_00040">
    <property type="entry name" value="RRF"/>
    <property type="match status" value="1"/>
</dbReference>
<dbReference type="InterPro" id="IPR002661">
    <property type="entry name" value="Ribosome_recyc_fac"/>
</dbReference>
<dbReference type="InterPro" id="IPR023584">
    <property type="entry name" value="Ribosome_recyc_fac_dom"/>
</dbReference>
<dbReference type="InterPro" id="IPR036191">
    <property type="entry name" value="RRF_sf"/>
</dbReference>
<dbReference type="NCBIfam" id="TIGR00496">
    <property type="entry name" value="frr"/>
    <property type="match status" value="1"/>
</dbReference>
<dbReference type="PANTHER" id="PTHR20982:SF3">
    <property type="entry name" value="MITOCHONDRIAL RIBOSOME RECYCLING FACTOR PSEUDO 1"/>
    <property type="match status" value="1"/>
</dbReference>
<dbReference type="PANTHER" id="PTHR20982">
    <property type="entry name" value="RIBOSOME RECYCLING FACTOR"/>
    <property type="match status" value="1"/>
</dbReference>
<dbReference type="Pfam" id="PF01765">
    <property type="entry name" value="RRF"/>
    <property type="match status" value="1"/>
</dbReference>
<dbReference type="SUPFAM" id="SSF55194">
    <property type="entry name" value="Ribosome recycling factor, RRF"/>
    <property type="match status" value="1"/>
</dbReference>
<gene>
    <name evidence="1" type="primary">frr</name>
    <name type="ordered locus">BSUIS_A1206</name>
</gene>
<evidence type="ECO:0000255" key="1">
    <source>
        <dbReference type="HAMAP-Rule" id="MF_00040"/>
    </source>
</evidence>